<name>PSB_MYCUA</name>
<protein>
    <recommendedName>
        <fullName evidence="1">Proteasome subunit beta</fullName>
        <ecNumber evidence="1">3.4.25.1</ecNumber>
    </recommendedName>
    <alternativeName>
        <fullName evidence="1">20S proteasome beta subunit</fullName>
    </alternativeName>
    <alternativeName>
        <fullName evidence="1">Proteasome core protein PrcB</fullName>
    </alternativeName>
</protein>
<evidence type="ECO:0000255" key="1">
    <source>
        <dbReference type="HAMAP-Rule" id="MF_02113"/>
    </source>
</evidence>
<feature type="propeptide" id="PRO_0000397552" description="Removed in mature form; by autocatalysis" evidence="1">
    <location>
        <begin position="1"/>
        <end position="55"/>
    </location>
</feature>
<feature type="chain" id="PRO_0000397553" description="Proteasome subunit beta">
    <location>
        <begin position="56"/>
        <end position="289"/>
    </location>
</feature>
<feature type="active site" description="Nucleophile" evidence="1">
    <location>
        <position position="56"/>
    </location>
</feature>
<reference key="1">
    <citation type="journal article" date="2007" name="Genome Res.">
        <title>Reductive evolution and niche adaptation inferred from the genome of Mycobacterium ulcerans, the causative agent of Buruli ulcer.</title>
        <authorList>
            <person name="Stinear T.P."/>
            <person name="Seemann T."/>
            <person name="Pidot S."/>
            <person name="Frigui W."/>
            <person name="Reysset G."/>
            <person name="Garnier T."/>
            <person name="Meurice G."/>
            <person name="Simon D."/>
            <person name="Bouchier C."/>
            <person name="Ma L."/>
            <person name="Tichit M."/>
            <person name="Porter J.L."/>
            <person name="Ryan J."/>
            <person name="Johnson P.D.R."/>
            <person name="Davies J.K."/>
            <person name="Jenkin G.A."/>
            <person name="Small P.L.C."/>
            <person name="Jones L.M."/>
            <person name="Tekaia F."/>
            <person name="Laval F."/>
            <person name="Daffe M."/>
            <person name="Parkhill J."/>
            <person name="Cole S.T."/>
        </authorList>
    </citation>
    <scope>NUCLEOTIDE SEQUENCE [LARGE SCALE GENOMIC DNA]</scope>
    <source>
        <strain>Agy99</strain>
    </source>
</reference>
<dbReference type="EC" id="3.4.25.1" evidence="1"/>
<dbReference type="EMBL" id="CP000325">
    <property type="protein sequence ID" value="ABL04702.1"/>
    <property type="molecule type" value="Genomic_DNA"/>
</dbReference>
<dbReference type="RefSeq" id="WP_011740318.1">
    <property type="nucleotide sequence ID" value="NC_008611.1"/>
</dbReference>
<dbReference type="SMR" id="A0PQT3"/>
<dbReference type="MEROPS" id="T01.005"/>
<dbReference type="GeneID" id="93437179"/>
<dbReference type="KEGG" id="mul:MUL_2331"/>
<dbReference type="eggNOG" id="COG0638">
    <property type="taxonomic scope" value="Bacteria"/>
</dbReference>
<dbReference type="HOGENOM" id="CLU_035750_2_0_11"/>
<dbReference type="UniPathway" id="UPA00997"/>
<dbReference type="Proteomes" id="UP000000765">
    <property type="component" value="Chromosome"/>
</dbReference>
<dbReference type="GO" id="GO:0005737">
    <property type="term" value="C:cytoplasm"/>
    <property type="evidence" value="ECO:0007669"/>
    <property type="project" value="UniProtKB-SubCell"/>
</dbReference>
<dbReference type="GO" id="GO:0019774">
    <property type="term" value="C:proteasome core complex, beta-subunit complex"/>
    <property type="evidence" value="ECO:0007669"/>
    <property type="project" value="UniProtKB-UniRule"/>
</dbReference>
<dbReference type="GO" id="GO:0004298">
    <property type="term" value="F:threonine-type endopeptidase activity"/>
    <property type="evidence" value="ECO:0007669"/>
    <property type="project" value="UniProtKB-UniRule"/>
</dbReference>
<dbReference type="GO" id="GO:0019941">
    <property type="term" value="P:modification-dependent protein catabolic process"/>
    <property type="evidence" value="ECO:0007669"/>
    <property type="project" value="UniProtKB-UniRule"/>
</dbReference>
<dbReference type="GO" id="GO:0010498">
    <property type="term" value="P:proteasomal protein catabolic process"/>
    <property type="evidence" value="ECO:0007669"/>
    <property type="project" value="UniProtKB-UniRule"/>
</dbReference>
<dbReference type="CDD" id="cd01906">
    <property type="entry name" value="proteasome_protease_HslV"/>
    <property type="match status" value="1"/>
</dbReference>
<dbReference type="FunFam" id="3.60.20.10:FF:000046">
    <property type="entry name" value="Proteasome subunit beta"/>
    <property type="match status" value="1"/>
</dbReference>
<dbReference type="Gene3D" id="3.60.20.10">
    <property type="entry name" value="Glutamine Phosphoribosylpyrophosphate, subunit 1, domain 1"/>
    <property type="match status" value="1"/>
</dbReference>
<dbReference type="HAMAP" id="MF_02113_B">
    <property type="entry name" value="Proteasome_B_B"/>
    <property type="match status" value="1"/>
</dbReference>
<dbReference type="InterPro" id="IPR029055">
    <property type="entry name" value="Ntn_hydrolases_N"/>
</dbReference>
<dbReference type="InterPro" id="IPR001353">
    <property type="entry name" value="Proteasome_sua/b"/>
</dbReference>
<dbReference type="InterPro" id="IPR023333">
    <property type="entry name" value="Proteasome_suB-type"/>
</dbReference>
<dbReference type="InterPro" id="IPR022483">
    <property type="entry name" value="PSB_actinobac"/>
</dbReference>
<dbReference type="NCBIfam" id="TIGR03690">
    <property type="entry name" value="20S_bact_beta"/>
    <property type="match status" value="1"/>
</dbReference>
<dbReference type="PANTHER" id="PTHR32194:SF0">
    <property type="entry name" value="ATP-DEPENDENT PROTEASE SUBUNIT HSLV"/>
    <property type="match status" value="1"/>
</dbReference>
<dbReference type="PANTHER" id="PTHR32194">
    <property type="entry name" value="METALLOPROTEASE TLDD"/>
    <property type="match status" value="1"/>
</dbReference>
<dbReference type="Pfam" id="PF00227">
    <property type="entry name" value="Proteasome"/>
    <property type="match status" value="1"/>
</dbReference>
<dbReference type="SUPFAM" id="SSF56235">
    <property type="entry name" value="N-terminal nucleophile aminohydrolases (Ntn hydrolases)"/>
    <property type="match status" value="1"/>
</dbReference>
<dbReference type="PROSITE" id="PS51476">
    <property type="entry name" value="PROTEASOME_BETA_2"/>
    <property type="match status" value="1"/>
</dbReference>
<sequence length="289" mass="30302">MTWPLPDRLSINSAISGSAVDLSSFAEFLRRQAPELLPASIKHGGGAVGDQLPHATTIVALKYPGGVLIAGDRRSTQGNMIAGRDVRKVYITDDYTATGIAGTAAIAVEFARLYAVELEHYEKLEGVPLTFAGKVNRLAIMVRGNLAAAMQGLVALPLLASYDIHASDPRSAGRIVSFDAAGGWNIEEEGYQAVGSGSIFAKSSIKKLYAQVTDADSALRVAVEALYDAADDDSATGGPDLVRGIYPTAVTINADGAVDVPEVRIAELAREVIGSRSRADTFGPDGGEK</sequence>
<proteinExistence type="inferred from homology"/>
<gene>
    <name evidence="1" type="primary">prcB</name>
    <name type="ordered locus">MUL_2331</name>
</gene>
<comment type="function">
    <text evidence="1">Component of the proteasome core, a large protease complex with broad specificity involved in protein degradation.</text>
</comment>
<comment type="catalytic activity">
    <reaction evidence="1">
        <text>Cleavage of peptide bonds with very broad specificity.</text>
        <dbReference type="EC" id="3.4.25.1"/>
    </reaction>
</comment>
<comment type="activity regulation">
    <text evidence="1">The formation of the proteasomal ATPase ARC-20S proteasome complex, likely via the docking of the C-termini of ARC into the intersubunit pockets in the alpha-rings, may trigger opening of the gate for substrate entry. Interconversion between the open-gate and close-gate conformations leads to a dynamic regulation of the 20S proteasome proteolysis activity.</text>
</comment>
<comment type="pathway">
    <text evidence="1">Protein degradation; proteasomal Pup-dependent pathway.</text>
</comment>
<comment type="subunit">
    <text evidence="1">The 20S proteasome core is composed of 14 alpha and 14 beta subunits that assemble into four stacked heptameric rings, resulting in a barrel-shaped structure. The two inner rings, each composed of seven catalytic beta subunits, are sandwiched by two outer rings, each composed of seven alpha subunits. The catalytic chamber with the active sites is on the inside of the barrel. Has a gated structure, the ends of the cylinder being occluded by the N-termini of the alpha-subunits. Is capped by the proteasome-associated ATPase, ARC.</text>
</comment>
<comment type="subcellular location">
    <subcellularLocation>
        <location evidence="1">Cytoplasm</location>
    </subcellularLocation>
</comment>
<comment type="similarity">
    <text evidence="1">Belongs to the peptidase T1B family.</text>
</comment>
<keyword id="KW-0068">Autocatalytic cleavage</keyword>
<keyword id="KW-0963">Cytoplasm</keyword>
<keyword id="KW-0378">Hydrolase</keyword>
<keyword id="KW-0645">Protease</keyword>
<keyword id="KW-0647">Proteasome</keyword>
<keyword id="KW-0888">Threonine protease</keyword>
<keyword id="KW-0865">Zymogen</keyword>
<organism>
    <name type="scientific">Mycobacterium ulcerans (strain Agy99)</name>
    <dbReference type="NCBI Taxonomy" id="362242"/>
    <lineage>
        <taxon>Bacteria</taxon>
        <taxon>Bacillati</taxon>
        <taxon>Actinomycetota</taxon>
        <taxon>Actinomycetes</taxon>
        <taxon>Mycobacteriales</taxon>
        <taxon>Mycobacteriaceae</taxon>
        <taxon>Mycobacterium</taxon>
        <taxon>Mycobacterium ulcerans group</taxon>
    </lineage>
</organism>
<accession>A0PQT3</accession>